<comment type="function">
    <text evidence="1">Essential cell division protein that coordinates cell division and chromosome segregation. The N-terminus is involved in assembly of the cell-division machinery. The C-terminus functions as a DNA motor that moves dsDNA in an ATP-dependent manner towards the dif recombination site, which is located within the replication terminus region. Required for activation of the Xer recombinase, allowing activation of chromosome unlinking by recombination (By similarity).</text>
</comment>
<comment type="subunit">
    <text evidence="1">Homohexamer. Forms a ring that surrounds DNA (By similarity).</text>
</comment>
<comment type="subcellular location">
    <subcellularLocation>
        <location evidence="1">Cell membrane</location>
        <topology evidence="1">Multi-pass membrane protein</topology>
    </subcellularLocation>
    <text evidence="1">Located at the septum.</text>
</comment>
<comment type="domain">
    <text evidence="1">Consists of an N-terminal domain, which is sufficient for the localization to the septal ring and is required for cell division, followed by a linker domain, and a C-terminal domain, which forms the translocation motor involved in chromosome segregation. The C-terminal domain can be further subdivided into alpha, beta and gamma subdomains. The alpha and beta subdomains form the DNA pump, and the gamma subdomain is a regulatory subdomain (By similarity).</text>
</comment>
<comment type="similarity">
    <text evidence="5">Belongs to the FtsK/SpoIIIE/SftA family.</text>
</comment>
<comment type="sequence caution" evidence="5">
    <conflict type="erroneous initiation">
        <sequence resource="EMBL-CDS" id="BAC70221"/>
    </conflict>
    <text>Extended N-terminus.</text>
</comment>
<gene>
    <name type="primary">ftsK</name>
    <name type="ordered locus">SAV_2510</name>
</gene>
<accession>Q82K93</accession>
<reference key="1">
    <citation type="journal article" date="2001" name="Proc. Natl. Acad. Sci. U.S.A.">
        <title>Genome sequence of an industrial microorganism Streptomyces avermitilis: deducing the ability of producing secondary metabolites.</title>
        <authorList>
            <person name="Omura S."/>
            <person name="Ikeda H."/>
            <person name="Ishikawa J."/>
            <person name="Hanamoto A."/>
            <person name="Takahashi C."/>
            <person name="Shinose M."/>
            <person name="Takahashi Y."/>
            <person name="Horikawa H."/>
            <person name="Nakazawa H."/>
            <person name="Osonoe T."/>
            <person name="Kikuchi H."/>
            <person name="Shiba T."/>
            <person name="Sakaki Y."/>
            <person name="Hattori M."/>
        </authorList>
    </citation>
    <scope>NUCLEOTIDE SEQUENCE [LARGE SCALE GENOMIC DNA]</scope>
    <source>
        <strain>ATCC 31267 / DSM 46492 / JCM 5070 / NBRC 14893 / NCIMB 12804 / NRRL 8165 / MA-4680</strain>
    </source>
</reference>
<reference key="2">
    <citation type="journal article" date="2003" name="Nat. Biotechnol.">
        <title>Complete genome sequence and comparative analysis of the industrial microorganism Streptomyces avermitilis.</title>
        <authorList>
            <person name="Ikeda H."/>
            <person name="Ishikawa J."/>
            <person name="Hanamoto A."/>
            <person name="Shinose M."/>
            <person name="Kikuchi H."/>
            <person name="Shiba T."/>
            <person name="Sakaki Y."/>
            <person name="Hattori M."/>
            <person name="Omura S."/>
        </authorList>
    </citation>
    <scope>NUCLEOTIDE SEQUENCE [LARGE SCALE GENOMIC DNA]</scope>
    <source>
        <strain>ATCC 31267 / DSM 46492 / JCM 5070 / NBRC 14893 / NCIMB 12804 / NRRL 8165 / MA-4680</strain>
    </source>
</reference>
<name>FTSK_STRAW</name>
<sequence>MASRQPAAKKPPAKKAAVPTKAPAKKAPAKKAAVRKAPARKVAAKKPAPKPAPNPTGGVYKLARALWLGVAHAVGAMFRGIGQGAKGLDPAHRKDGLALLLLGLALIVAAGTWSNLRGPVGDLVEMLVTGAFGRLDLLVPILLAVIAVRFIRHPEKPEANGRIVIGLSALVIGVLGQVHIACGAPARSDGMQAIRDAGGLIGWSAATPLTYTMGDVLAVPLLVLLTVFGLLVVTATPVNAIPQRLRLLGVRLGVVHDAQEGLAEDDERYDEQWREALPPNARRRGPAPAGYDPDGDEQEALSKRRSRPRRSAGQQPDLNRPMDAVDVAAAAAAALDGAVLHGMPPSPLVADLTQGVTVERDGYEETTPVPAARAKAVKPPRKEASKAGVPDLTKAPPAETRDLPARAEQLQLSGDITYSLPSLDLLERGGPGKTRSAANDAVVASLSNVFMEFKVDAAVTGFTRGPTVTRYEVELGPAVKVERITALTKNIAYAVASPDVRIISPIPGKSAVGIEIPNTDREMVNLGDVLRLADAAEDDHPMLVALGKDVEGGYVMANLAKMPHLLVAGATGSGKSSCINCLITSVMVRATPEDVRMVLVDPKRVELTAYEGIPHLITPIITNPKRAAEALQWVVREMDLRYDDLAAFGYRHIDDFNEAIRNGKVKLPEGSERELSPYPYLLVIVDELADLMMVAPRDVEDAIVRITQLARAAGIHLVLATQRPSVDVVTGLIKANVPSRLAFATSSLADSRVILDQPGAEKLIGKGDGLFLPMGANKPTRMQGAFVTEDEVEAVVQHCKDQMAPVFRDDVTVGTKQKKEIDEDIGDDLDLLCQAAELVVSTQFGSTSMLQRKLRVGFAKAGRLMDLMESRNIVGPSEGSKARDVLVKADELDGVLAVIRGEAAP</sequence>
<evidence type="ECO:0000250" key="1"/>
<evidence type="ECO:0000255" key="2"/>
<evidence type="ECO:0000255" key="3">
    <source>
        <dbReference type="PROSITE-ProRule" id="PRU00289"/>
    </source>
</evidence>
<evidence type="ECO:0000256" key="4">
    <source>
        <dbReference type="SAM" id="MobiDB-lite"/>
    </source>
</evidence>
<evidence type="ECO:0000305" key="5"/>
<proteinExistence type="inferred from homology"/>
<dbReference type="EMBL" id="BA000030">
    <property type="protein sequence ID" value="BAC70221.1"/>
    <property type="status" value="ALT_INIT"/>
    <property type="molecule type" value="Genomic_DNA"/>
</dbReference>
<dbReference type="RefSeq" id="WP_052082383.1">
    <property type="nucleotide sequence ID" value="NZ_JZJK01000086.1"/>
</dbReference>
<dbReference type="SMR" id="Q82K93"/>
<dbReference type="GeneID" id="41539595"/>
<dbReference type="KEGG" id="sma:SAVERM_2510"/>
<dbReference type="eggNOG" id="COG1674">
    <property type="taxonomic scope" value="Bacteria"/>
</dbReference>
<dbReference type="HOGENOM" id="CLU_001981_2_2_11"/>
<dbReference type="Proteomes" id="UP000000428">
    <property type="component" value="Chromosome"/>
</dbReference>
<dbReference type="GO" id="GO:0005886">
    <property type="term" value="C:plasma membrane"/>
    <property type="evidence" value="ECO:0007669"/>
    <property type="project" value="UniProtKB-SubCell"/>
</dbReference>
<dbReference type="GO" id="GO:0005524">
    <property type="term" value="F:ATP binding"/>
    <property type="evidence" value="ECO:0007669"/>
    <property type="project" value="UniProtKB-KW"/>
</dbReference>
<dbReference type="GO" id="GO:0016887">
    <property type="term" value="F:ATP hydrolysis activity"/>
    <property type="evidence" value="ECO:0007669"/>
    <property type="project" value="InterPro"/>
</dbReference>
<dbReference type="GO" id="GO:0003677">
    <property type="term" value="F:DNA binding"/>
    <property type="evidence" value="ECO:0007669"/>
    <property type="project" value="UniProtKB-KW"/>
</dbReference>
<dbReference type="GO" id="GO:0051301">
    <property type="term" value="P:cell division"/>
    <property type="evidence" value="ECO:0007669"/>
    <property type="project" value="UniProtKB-KW"/>
</dbReference>
<dbReference type="GO" id="GO:0007059">
    <property type="term" value="P:chromosome segregation"/>
    <property type="evidence" value="ECO:0007669"/>
    <property type="project" value="UniProtKB-KW"/>
</dbReference>
<dbReference type="CDD" id="cd01127">
    <property type="entry name" value="TrwB_TraG_TraD_VirD4"/>
    <property type="match status" value="1"/>
</dbReference>
<dbReference type="Gene3D" id="3.30.980.40">
    <property type="match status" value="1"/>
</dbReference>
<dbReference type="Gene3D" id="3.40.50.300">
    <property type="entry name" value="P-loop containing nucleotide triphosphate hydrolases"/>
    <property type="match status" value="1"/>
</dbReference>
<dbReference type="Gene3D" id="1.10.10.10">
    <property type="entry name" value="Winged helix-like DNA-binding domain superfamily/Winged helix DNA-binding domain"/>
    <property type="match status" value="1"/>
</dbReference>
<dbReference type="InterPro" id="IPR003593">
    <property type="entry name" value="AAA+_ATPase"/>
</dbReference>
<dbReference type="InterPro" id="IPR050206">
    <property type="entry name" value="FtsK/SpoIIIE/SftA"/>
</dbReference>
<dbReference type="InterPro" id="IPR041027">
    <property type="entry name" value="FtsK_alpha"/>
</dbReference>
<dbReference type="InterPro" id="IPR002543">
    <property type="entry name" value="FtsK_dom"/>
</dbReference>
<dbReference type="InterPro" id="IPR018541">
    <property type="entry name" value="Ftsk_gamma"/>
</dbReference>
<dbReference type="InterPro" id="IPR027417">
    <property type="entry name" value="P-loop_NTPase"/>
</dbReference>
<dbReference type="InterPro" id="IPR036388">
    <property type="entry name" value="WH-like_DNA-bd_sf"/>
</dbReference>
<dbReference type="InterPro" id="IPR036390">
    <property type="entry name" value="WH_DNA-bd_sf"/>
</dbReference>
<dbReference type="PANTHER" id="PTHR22683:SF41">
    <property type="entry name" value="DNA TRANSLOCASE FTSK"/>
    <property type="match status" value="1"/>
</dbReference>
<dbReference type="PANTHER" id="PTHR22683">
    <property type="entry name" value="SPORULATION PROTEIN RELATED"/>
    <property type="match status" value="1"/>
</dbReference>
<dbReference type="Pfam" id="PF17854">
    <property type="entry name" value="FtsK_alpha"/>
    <property type="match status" value="1"/>
</dbReference>
<dbReference type="Pfam" id="PF09397">
    <property type="entry name" value="FtsK_gamma"/>
    <property type="match status" value="1"/>
</dbReference>
<dbReference type="Pfam" id="PF01580">
    <property type="entry name" value="FtsK_SpoIIIE"/>
    <property type="match status" value="1"/>
</dbReference>
<dbReference type="SMART" id="SM00382">
    <property type="entry name" value="AAA"/>
    <property type="match status" value="1"/>
</dbReference>
<dbReference type="SMART" id="SM00843">
    <property type="entry name" value="Ftsk_gamma"/>
    <property type="match status" value="1"/>
</dbReference>
<dbReference type="SUPFAM" id="SSF52540">
    <property type="entry name" value="P-loop containing nucleoside triphosphate hydrolases"/>
    <property type="match status" value="1"/>
</dbReference>
<dbReference type="SUPFAM" id="SSF46785">
    <property type="entry name" value="Winged helix' DNA-binding domain"/>
    <property type="match status" value="1"/>
</dbReference>
<dbReference type="PROSITE" id="PS50901">
    <property type="entry name" value="FTSK"/>
    <property type="match status" value="1"/>
</dbReference>
<organism>
    <name type="scientific">Streptomyces avermitilis (strain ATCC 31267 / DSM 46492 / JCM 5070 / NBRC 14893 / NCIMB 12804 / NRRL 8165 / MA-4680)</name>
    <dbReference type="NCBI Taxonomy" id="227882"/>
    <lineage>
        <taxon>Bacteria</taxon>
        <taxon>Bacillati</taxon>
        <taxon>Actinomycetota</taxon>
        <taxon>Actinomycetes</taxon>
        <taxon>Kitasatosporales</taxon>
        <taxon>Streptomycetaceae</taxon>
        <taxon>Streptomyces</taxon>
    </lineage>
</organism>
<keyword id="KW-0067">ATP-binding</keyword>
<keyword id="KW-0131">Cell cycle</keyword>
<keyword id="KW-0132">Cell division</keyword>
<keyword id="KW-1003">Cell membrane</keyword>
<keyword id="KW-0159">Chromosome partition</keyword>
<keyword id="KW-0238">DNA-binding</keyword>
<keyword id="KW-0472">Membrane</keyword>
<keyword id="KW-0547">Nucleotide-binding</keyword>
<keyword id="KW-1185">Reference proteome</keyword>
<keyword id="KW-0812">Transmembrane</keyword>
<keyword id="KW-1133">Transmembrane helix</keyword>
<protein>
    <recommendedName>
        <fullName>DNA translocase FtsK</fullName>
    </recommendedName>
</protein>
<feature type="chain" id="PRO_0000098303" description="DNA translocase FtsK">
    <location>
        <begin position="1"/>
        <end position="905"/>
    </location>
</feature>
<feature type="transmembrane region" description="Helical" evidence="2">
    <location>
        <begin position="65"/>
        <end position="85"/>
    </location>
</feature>
<feature type="transmembrane region" description="Helical" evidence="2">
    <location>
        <begin position="96"/>
        <end position="116"/>
    </location>
</feature>
<feature type="transmembrane region" description="Helical" evidence="2">
    <location>
        <begin position="126"/>
        <end position="146"/>
    </location>
</feature>
<feature type="transmembrane region" description="Helical" evidence="2">
    <location>
        <begin position="163"/>
        <end position="183"/>
    </location>
</feature>
<feature type="transmembrane region" description="Helical" evidence="2">
    <location>
        <begin position="216"/>
        <end position="236"/>
    </location>
</feature>
<feature type="topological domain" description="Cytoplasmic" evidence="2">
    <location>
        <begin position="237"/>
        <end position="905"/>
    </location>
</feature>
<feature type="domain" description="FtsK" evidence="3">
    <location>
        <begin position="552"/>
        <end position="752"/>
    </location>
</feature>
<feature type="region of interest" description="Disordered" evidence="4">
    <location>
        <begin position="1"/>
        <end position="55"/>
    </location>
</feature>
<feature type="region of interest" description="Disordered" evidence="4">
    <location>
        <begin position="263"/>
        <end position="321"/>
    </location>
</feature>
<feature type="region of interest" description="Disordered" evidence="4">
    <location>
        <begin position="372"/>
        <end position="403"/>
    </location>
</feature>
<feature type="compositionally biased region" description="Low complexity" evidence="4">
    <location>
        <begin position="1"/>
        <end position="22"/>
    </location>
</feature>
<feature type="compositionally biased region" description="Basic residues" evidence="4">
    <location>
        <begin position="23"/>
        <end position="48"/>
    </location>
</feature>
<feature type="binding site" evidence="3">
    <location>
        <begin position="572"/>
        <end position="577"/>
    </location>
    <ligand>
        <name>ATP</name>
        <dbReference type="ChEBI" id="CHEBI:30616"/>
    </ligand>
</feature>